<evidence type="ECO:0000250" key="1"/>
<evidence type="ECO:0000250" key="2">
    <source>
        <dbReference type="UniProtKB" id="P09450"/>
    </source>
</evidence>
<evidence type="ECO:0000250" key="3">
    <source>
        <dbReference type="UniProtKB" id="P17275"/>
    </source>
</evidence>
<evidence type="ECO:0000255" key="4">
    <source>
        <dbReference type="PROSITE-ProRule" id="PRU00978"/>
    </source>
</evidence>
<evidence type="ECO:0000256" key="5">
    <source>
        <dbReference type="SAM" id="MobiDB-lite"/>
    </source>
</evidence>
<evidence type="ECO:0000305" key="6"/>
<evidence type="ECO:0007744" key="7">
    <source>
    </source>
</evidence>
<comment type="function">
    <text evidence="2">Transcription factor involved in regulating gene activity following the primary growth factor response. Binds to the DNA sequence 5'-TGA[GC]TCA-3'. Heterodimerizes with proteins of the FOS family to form an AP-1 transcription complex, thereby enhancing its DNA binding activity to an AP-1 consensus sequence and its transcriptional activity (By similarity).</text>
</comment>
<comment type="subunit">
    <text evidence="1 2">Binds DNA as a homodimer or as a heterodimer with another member of the Jun/Fos family. Component of an AP-1 transcription factor complex (By similarity). As part of the AP-1 transcription factor complex, forms heterodimers with FOSB, thereby binding to the AP-1 consensus sequence and stimulating transcription (By similarity). Interacts with NFE2 (via its WW domains).</text>
</comment>
<comment type="subcellular location">
    <subcellularLocation>
        <location>Nucleus</location>
    </subcellularLocation>
</comment>
<comment type="induction">
    <text>By growth factors.</text>
</comment>
<comment type="PTM">
    <text evidence="1">Ubiquitinated by ITCH, leading to its degradation.</text>
</comment>
<comment type="similarity">
    <text evidence="6">Belongs to the bZIP family. Jun subfamily.</text>
</comment>
<organism>
    <name type="scientific">Rattus norvegicus</name>
    <name type="common">Rat</name>
    <dbReference type="NCBI Taxonomy" id="10116"/>
    <lineage>
        <taxon>Eukaryota</taxon>
        <taxon>Metazoa</taxon>
        <taxon>Chordata</taxon>
        <taxon>Craniata</taxon>
        <taxon>Vertebrata</taxon>
        <taxon>Euteleostomi</taxon>
        <taxon>Mammalia</taxon>
        <taxon>Eutheria</taxon>
        <taxon>Euarchontoglires</taxon>
        <taxon>Glires</taxon>
        <taxon>Rodentia</taxon>
        <taxon>Myomorpha</taxon>
        <taxon>Muroidea</taxon>
        <taxon>Muridae</taxon>
        <taxon>Murinae</taxon>
        <taxon>Rattus</taxon>
    </lineage>
</organism>
<sequence>MCTKMEQPFYHDDSYAAAGYGRSPGSLSLHDYKLLKPTLALNLADPYRGLKGPGARGPGPEGSGAGSYFSGQGSDTGASLKLASTELERLIVPNSNGVITTTPTPPGQYFYPRGGGSGGGTGGGVTEEQEGFADGFVKALDDLHKMNHVTPPNVSLGASGGPQAGPGGVYAGPEPPPVYTNLSSYSPASAPSGGSGTAVGTGSSYPTATISYLPHAPPFAGGHPAQLGLSRGASAFKEEPQTVPEARSRDATPPVSPINMEDQERIKVERKRLRNRLAATKCRKRKLERIARLEDKVKTLKAENAGLSSAAGLLREQVAQLKQKVMTHVSNGCQLLLGVKGHAF</sequence>
<keyword id="KW-0007">Acetylation</keyword>
<keyword id="KW-0238">DNA-binding</keyword>
<keyword id="KW-1017">Isopeptide bond</keyword>
<keyword id="KW-0539">Nucleus</keyword>
<keyword id="KW-0597">Phosphoprotein</keyword>
<keyword id="KW-1185">Reference proteome</keyword>
<keyword id="KW-0804">Transcription</keyword>
<keyword id="KW-0805">Transcription regulation</keyword>
<keyword id="KW-0832">Ubl conjugation</keyword>
<protein>
    <recommendedName>
        <fullName evidence="6">Transcription factor JunB</fullName>
    </recommendedName>
    <alternativeName>
        <fullName evidence="6">Transcription factor AP-1 subunit JunB</fullName>
    </alternativeName>
</protein>
<name>JUNB_RAT</name>
<feature type="chain" id="PRO_0000076440" description="Transcription factor JunB">
    <location>
        <begin position="1"/>
        <end position="344"/>
    </location>
</feature>
<feature type="domain" description="bZIP" evidence="4">
    <location>
        <begin position="265"/>
        <end position="328"/>
    </location>
</feature>
<feature type="region of interest" description="Disordered" evidence="5">
    <location>
        <begin position="51"/>
        <end position="75"/>
    </location>
</feature>
<feature type="region of interest" description="Disordered" evidence="5">
    <location>
        <begin position="181"/>
        <end position="202"/>
    </location>
</feature>
<feature type="region of interest" description="Disordered" evidence="5">
    <location>
        <begin position="237"/>
        <end position="257"/>
    </location>
</feature>
<feature type="region of interest" description="Basic motif" evidence="4">
    <location>
        <begin position="265"/>
        <end position="292"/>
    </location>
</feature>
<feature type="region of interest" description="Leucine-zipper" evidence="4">
    <location>
        <begin position="293"/>
        <end position="321"/>
    </location>
</feature>
<feature type="compositionally biased region" description="Gly residues" evidence="5">
    <location>
        <begin position="51"/>
        <end position="65"/>
    </location>
</feature>
<feature type="compositionally biased region" description="Low complexity" evidence="5">
    <location>
        <begin position="183"/>
        <end position="192"/>
    </location>
</feature>
<feature type="compositionally biased region" description="Basic and acidic residues" evidence="5">
    <location>
        <begin position="237"/>
        <end position="250"/>
    </location>
</feature>
<feature type="modified residue" description="Phosphothreonine" evidence="3">
    <location>
        <position position="102"/>
    </location>
</feature>
<feature type="modified residue" description="Phosphothreonine" evidence="3">
    <location>
        <position position="104"/>
    </location>
</feature>
<feature type="modified residue" description="Phosphoserine" evidence="3">
    <location>
        <position position="117"/>
    </location>
</feature>
<feature type="modified residue" description="N6-acetyllysine; alternate" evidence="2">
    <location>
        <position position="237"/>
    </location>
</feature>
<feature type="modified residue" description="Phosphoserine" evidence="3">
    <location>
        <position position="248"/>
    </location>
</feature>
<feature type="modified residue" description="Phosphothreonine" evidence="7">
    <location>
        <position position="252"/>
    </location>
</feature>
<feature type="modified residue" description="Phosphoserine" evidence="7">
    <location>
        <position position="256"/>
    </location>
</feature>
<feature type="cross-link" description="Glycyl lysine isopeptide (Lys-Gly) (interchain with G-Cter in SUMO2)" evidence="3">
    <location>
        <position position="4"/>
    </location>
</feature>
<feature type="cross-link" description="Glycyl lysine isopeptide (Lys-Gly) (interchain with G-Cter in SUMO2)" evidence="3">
    <location>
        <position position="33"/>
    </location>
</feature>
<feature type="cross-link" description="Glycyl lysine isopeptide (Lys-Gly) (interchain with G-Cter in SUMO2)" evidence="3">
    <location>
        <position position="36"/>
    </location>
</feature>
<feature type="cross-link" description="Glycyl lysine isopeptide (Lys-Gly) (interchain with G-Cter in SUMO2)" evidence="3">
    <location>
        <position position="81"/>
    </location>
</feature>
<feature type="cross-link" description="Glycyl lysine isopeptide (Lys-Gly) (interchain with G-Cter in SUMO2)" evidence="3">
    <location>
        <position position="138"/>
    </location>
</feature>
<feature type="cross-link" description="Glycyl lysine isopeptide (Lys-Gly) (interchain with G-Cter in SUMO1); alternate" evidence="3">
    <location>
        <position position="237"/>
    </location>
</feature>
<feature type="cross-link" description="Glycyl lysine isopeptide (Lys-Gly) (interchain with G-Cter in SUMO2); alternate" evidence="3">
    <location>
        <position position="237"/>
    </location>
</feature>
<feature type="cross-link" description="Glycyl lysine isopeptide (Lys-Gly) (interchain with G-Cter in SUMO2)" evidence="3">
    <location>
        <position position="340"/>
    </location>
</feature>
<feature type="sequence conflict" description="In Ref. 1; CAA38500." evidence="6" ref="1">
    <original>P</original>
    <variation>A</variation>
    <location>
        <position position="8"/>
    </location>
</feature>
<feature type="sequence conflict" description="In Ref. 1; CAA38500." evidence="6" ref="1">
    <original>H</original>
    <variation>Q</variation>
    <location>
        <position position="144"/>
    </location>
</feature>
<feature type="sequence conflict" description="In Ref. 2; AAH61862." evidence="6" ref="2">
    <original>A</original>
    <variation>T</variation>
    <location>
        <position position="310"/>
    </location>
</feature>
<accession>P24898</accession>
<accession>Q6P733</accession>
<gene>
    <name type="primary">Junb</name>
    <name type="synonym">Jun-b</name>
</gene>
<reference key="1">
    <citation type="journal article" date="1992" name="Nucleic Acids Res.">
        <title>Conserved structural motifs among mammalian junB genes.</title>
        <authorList>
            <person name="Kawakami Z."/>
            <person name="Kitabayashi I."/>
            <person name="Matsuoka T."/>
            <person name="Gachelin G."/>
            <person name="Yokoyama K."/>
        </authorList>
    </citation>
    <scope>NUCLEOTIDE SEQUENCE [GENOMIC DNA]</scope>
    <source>
        <strain>Fischer</strain>
        <tissue>Liver</tissue>
    </source>
</reference>
<reference key="2">
    <citation type="journal article" date="2004" name="Genome Res.">
        <title>The status, quality, and expansion of the NIH full-length cDNA project: the Mammalian Gene Collection (MGC).</title>
        <authorList>
            <consortium name="The MGC Project Team"/>
        </authorList>
    </citation>
    <scope>NUCLEOTIDE SEQUENCE [LARGE SCALE MRNA]</scope>
    <source>
        <tissue>Prostate</tissue>
    </source>
</reference>
<reference key="3">
    <citation type="journal article" date="2012" name="Nat. Commun.">
        <title>Quantitative maps of protein phosphorylation sites across 14 different rat organs and tissues.</title>
        <authorList>
            <person name="Lundby A."/>
            <person name="Secher A."/>
            <person name="Lage K."/>
            <person name="Nordsborg N.B."/>
            <person name="Dmytriyev A."/>
            <person name="Lundby C."/>
            <person name="Olsen J.V."/>
        </authorList>
    </citation>
    <scope>PHOSPHORYLATION [LARGE SCALE ANALYSIS] AT THR-252 AND SER-256</scope>
    <scope>IDENTIFICATION BY MASS SPECTROMETRY [LARGE SCALE ANALYSIS]</scope>
</reference>
<proteinExistence type="evidence at protein level"/>
<dbReference type="EMBL" id="X54686">
    <property type="protein sequence ID" value="CAA38500.1"/>
    <property type="molecule type" value="Genomic_DNA"/>
</dbReference>
<dbReference type="EMBL" id="BC061862">
    <property type="protein sequence ID" value="AAH61862.1"/>
    <property type="molecule type" value="mRNA"/>
</dbReference>
<dbReference type="PIR" id="S21063">
    <property type="entry name" value="S21063"/>
</dbReference>
<dbReference type="RefSeq" id="NP_068608.2">
    <property type="nucleotide sequence ID" value="NM_021836.2"/>
</dbReference>
<dbReference type="SMR" id="P24898"/>
<dbReference type="BioGRID" id="246672">
    <property type="interactions" value="1"/>
</dbReference>
<dbReference type="CORUM" id="P24898"/>
<dbReference type="FunCoup" id="P24898">
    <property type="interactions" value="375"/>
</dbReference>
<dbReference type="STRING" id="10116.ENSRNOP00000061729"/>
<dbReference type="GlyGen" id="P24898">
    <property type="glycosylation" value="1 site"/>
</dbReference>
<dbReference type="iPTMnet" id="P24898"/>
<dbReference type="PhosphoSitePlus" id="P24898"/>
<dbReference type="PaxDb" id="10116-ENSRNOP00000061729"/>
<dbReference type="GeneID" id="24517"/>
<dbReference type="KEGG" id="rno:24517"/>
<dbReference type="AGR" id="RGD:2944"/>
<dbReference type="CTD" id="3726"/>
<dbReference type="RGD" id="2944">
    <property type="gene designation" value="Junb"/>
</dbReference>
<dbReference type="eggNOG" id="KOG0837">
    <property type="taxonomic scope" value="Eukaryota"/>
</dbReference>
<dbReference type="InParanoid" id="P24898"/>
<dbReference type="OrthoDB" id="2187714at2759"/>
<dbReference type="PhylomeDB" id="P24898"/>
<dbReference type="PRO" id="PR:P24898"/>
<dbReference type="Proteomes" id="UP000002494">
    <property type="component" value="Unplaced"/>
</dbReference>
<dbReference type="GO" id="GO:0005654">
    <property type="term" value="C:nucleoplasm"/>
    <property type="evidence" value="ECO:0000304"/>
    <property type="project" value="Reactome"/>
</dbReference>
<dbReference type="GO" id="GO:0090575">
    <property type="term" value="C:RNA polymerase II transcription regulator complex"/>
    <property type="evidence" value="ECO:0000266"/>
    <property type="project" value="RGD"/>
</dbReference>
<dbReference type="GO" id="GO:0035976">
    <property type="term" value="C:transcription factor AP-1 complex"/>
    <property type="evidence" value="ECO:0000266"/>
    <property type="project" value="RGD"/>
</dbReference>
<dbReference type="GO" id="GO:0005667">
    <property type="term" value="C:transcription regulator complex"/>
    <property type="evidence" value="ECO:0000318"/>
    <property type="project" value="GO_Central"/>
</dbReference>
<dbReference type="GO" id="GO:0003677">
    <property type="term" value="F:DNA binding"/>
    <property type="evidence" value="ECO:0000314"/>
    <property type="project" value="RGD"/>
</dbReference>
<dbReference type="GO" id="GO:0001228">
    <property type="term" value="F:DNA-binding transcription activator activity, RNA polymerase II-specific"/>
    <property type="evidence" value="ECO:0000266"/>
    <property type="project" value="RGD"/>
</dbReference>
<dbReference type="GO" id="GO:0003700">
    <property type="term" value="F:DNA-binding transcription factor activity"/>
    <property type="evidence" value="ECO:0000315"/>
    <property type="project" value="RGD"/>
</dbReference>
<dbReference type="GO" id="GO:0000981">
    <property type="term" value="F:DNA-binding transcription factor activity, RNA polymerase II-specific"/>
    <property type="evidence" value="ECO:0000318"/>
    <property type="project" value="GO_Central"/>
</dbReference>
<dbReference type="GO" id="GO:0003690">
    <property type="term" value="F:double-stranded DNA binding"/>
    <property type="evidence" value="ECO:0000314"/>
    <property type="project" value="RGD"/>
</dbReference>
<dbReference type="GO" id="GO:0000978">
    <property type="term" value="F:RNA polymerase II cis-regulatory region sequence-specific DNA binding"/>
    <property type="evidence" value="ECO:0000266"/>
    <property type="project" value="RGD"/>
</dbReference>
<dbReference type="GO" id="GO:0000977">
    <property type="term" value="F:RNA polymerase II transcription regulatory region sequence-specific DNA binding"/>
    <property type="evidence" value="ECO:0000266"/>
    <property type="project" value="RGD"/>
</dbReference>
<dbReference type="GO" id="GO:0043565">
    <property type="term" value="F:sequence-specific DNA binding"/>
    <property type="evidence" value="ECO:0000314"/>
    <property type="project" value="RGD"/>
</dbReference>
<dbReference type="GO" id="GO:1990837">
    <property type="term" value="F:sequence-specific double-stranded DNA binding"/>
    <property type="evidence" value="ECO:0000266"/>
    <property type="project" value="RGD"/>
</dbReference>
<dbReference type="GO" id="GO:0030154">
    <property type="term" value="P:cell differentiation"/>
    <property type="evidence" value="ECO:0000266"/>
    <property type="project" value="RGD"/>
</dbReference>
<dbReference type="GO" id="GO:0071277">
    <property type="term" value="P:cellular response to calcium ion"/>
    <property type="evidence" value="ECO:0000266"/>
    <property type="project" value="RGD"/>
</dbReference>
<dbReference type="GO" id="GO:0032870">
    <property type="term" value="P:cellular response to hormone stimulus"/>
    <property type="evidence" value="ECO:0000270"/>
    <property type="project" value="RGD"/>
</dbReference>
<dbReference type="GO" id="GO:0071456">
    <property type="term" value="P:cellular response to hypoxia"/>
    <property type="evidence" value="ECO:0000270"/>
    <property type="project" value="RGD"/>
</dbReference>
<dbReference type="GO" id="GO:0046697">
    <property type="term" value="P:decidualization"/>
    <property type="evidence" value="ECO:0000266"/>
    <property type="project" value="RGD"/>
</dbReference>
<dbReference type="GO" id="GO:0060136">
    <property type="term" value="P:embryonic process involved in female pregnancy"/>
    <property type="evidence" value="ECO:0000266"/>
    <property type="project" value="RGD"/>
</dbReference>
<dbReference type="GO" id="GO:0007565">
    <property type="term" value="P:female pregnancy"/>
    <property type="evidence" value="ECO:0000270"/>
    <property type="project" value="RGD"/>
</dbReference>
<dbReference type="GO" id="GO:0001701">
    <property type="term" value="P:in utero embryonic development"/>
    <property type="evidence" value="ECO:0000266"/>
    <property type="project" value="RGD"/>
</dbReference>
<dbReference type="GO" id="GO:0060716">
    <property type="term" value="P:labyrinthine layer blood vessel development"/>
    <property type="evidence" value="ECO:0000266"/>
    <property type="project" value="RGD"/>
</dbReference>
<dbReference type="GO" id="GO:0001649">
    <property type="term" value="P:osteoblast differentiation"/>
    <property type="evidence" value="ECO:0000266"/>
    <property type="project" value="RGD"/>
</dbReference>
<dbReference type="GO" id="GO:0033687">
    <property type="term" value="P:osteoblast proliferation"/>
    <property type="evidence" value="ECO:0000266"/>
    <property type="project" value="RGD"/>
</dbReference>
<dbReference type="GO" id="GO:0030316">
    <property type="term" value="P:osteoclast differentiation"/>
    <property type="evidence" value="ECO:0000266"/>
    <property type="project" value="RGD"/>
</dbReference>
<dbReference type="GO" id="GO:0002158">
    <property type="term" value="P:osteoclast proliferation"/>
    <property type="evidence" value="ECO:0000266"/>
    <property type="project" value="RGD"/>
</dbReference>
<dbReference type="GO" id="GO:0045597">
    <property type="term" value="P:positive regulation of cell differentiation"/>
    <property type="evidence" value="ECO:0000266"/>
    <property type="project" value="RGD"/>
</dbReference>
<dbReference type="GO" id="GO:0045944">
    <property type="term" value="P:positive regulation of transcription by RNA polymerase II"/>
    <property type="evidence" value="ECO:0000266"/>
    <property type="project" value="RGD"/>
</dbReference>
<dbReference type="GO" id="GO:0051726">
    <property type="term" value="P:regulation of cell cycle"/>
    <property type="evidence" value="ECO:0000266"/>
    <property type="project" value="RGD"/>
</dbReference>
<dbReference type="GO" id="GO:0042127">
    <property type="term" value="P:regulation of cell population proliferation"/>
    <property type="evidence" value="ECO:0000318"/>
    <property type="project" value="GO_Central"/>
</dbReference>
<dbReference type="GO" id="GO:0006355">
    <property type="term" value="P:regulation of DNA-templated transcription"/>
    <property type="evidence" value="ECO:0000266"/>
    <property type="project" value="RGD"/>
</dbReference>
<dbReference type="GO" id="GO:0072724">
    <property type="term" value="P:response to 4-nitroquinoline N-oxide"/>
    <property type="evidence" value="ECO:0000270"/>
    <property type="project" value="RGD"/>
</dbReference>
<dbReference type="GO" id="GO:0051591">
    <property type="term" value="P:response to cAMP"/>
    <property type="evidence" value="ECO:0000270"/>
    <property type="project" value="RGD"/>
</dbReference>
<dbReference type="GO" id="GO:0051412">
    <property type="term" value="P:response to corticosterone"/>
    <property type="evidence" value="ECO:0000270"/>
    <property type="project" value="RGD"/>
</dbReference>
<dbReference type="GO" id="GO:0034097">
    <property type="term" value="P:response to cytokine"/>
    <property type="evidence" value="ECO:0000270"/>
    <property type="project" value="RGD"/>
</dbReference>
<dbReference type="GO" id="GO:1904321">
    <property type="term" value="P:response to forskolin"/>
    <property type="evidence" value="ECO:0000270"/>
    <property type="project" value="RGD"/>
</dbReference>
<dbReference type="GO" id="GO:0009416">
    <property type="term" value="P:response to light stimulus"/>
    <property type="evidence" value="ECO:0000270"/>
    <property type="project" value="RGD"/>
</dbReference>
<dbReference type="GO" id="GO:0009612">
    <property type="term" value="P:response to mechanical stimulus"/>
    <property type="evidence" value="ECO:0000270"/>
    <property type="project" value="RGD"/>
</dbReference>
<dbReference type="GO" id="GO:0043434">
    <property type="term" value="P:response to peptide hormone"/>
    <property type="evidence" value="ECO:0000270"/>
    <property type="project" value="RGD"/>
</dbReference>
<dbReference type="GO" id="GO:0032570">
    <property type="term" value="P:response to progesterone"/>
    <property type="evidence" value="ECO:0000270"/>
    <property type="project" value="RGD"/>
</dbReference>
<dbReference type="GO" id="GO:0048545">
    <property type="term" value="P:response to steroid hormone"/>
    <property type="evidence" value="ECO:0000318"/>
    <property type="project" value="GO_Central"/>
</dbReference>
<dbReference type="GO" id="GO:0009410">
    <property type="term" value="P:response to xenobiotic stimulus"/>
    <property type="evidence" value="ECO:0000270"/>
    <property type="project" value="RGD"/>
</dbReference>
<dbReference type="GO" id="GO:0006366">
    <property type="term" value="P:transcription by RNA polymerase II"/>
    <property type="evidence" value="ECO:0000315"/>
    <property type="project" value="RGD"/>
</dbReference>
<dbReference type="GO" id="GO:0001829">
    <property type="term" value="P:trophectodermal cell differentiation"/>
    <property type="evidence" value="ECO:0000266"/>
    <property type="project" value="RGD"/>
</dbReference>
<dbReference type="GO" id="GO:0001570">
    <property type="term" value="P:vasculogenesis"/>
    <property type="evidence" value="ECO:0000266"/>
    <property type="project" value="RGD"/>
</dbReference>
<dbReference type="CDD" id="cd14696">
    <property type="entry name" value="bZIP_Jun"/>
    <property type="match status" value="1"/>
</dbReference>
<dbReference type="FunFam" id="1.20.5.170:FF:000012">
    <property type="entry name" value="Putative transcription factor AP-1"/>
    <property type="match status" value="1"/>
</dbReference>
<dbReference type="Gene3D" id="1.20.5.170">
    <property type="match status" value="1"/>
</dbReference>
<dbReference type="InterPro" id="IPR050946">
    <property type="entry name" value="AP-1_TF_bZIP"/>
</dbReference>
<dbReference type="InterPro" id="IPR004827">
    <property type="entry name" value="bZIP"/>
</dbReference>
<dbReference type="InterPro" id="IPR046347">
    <property type="entry name" value="bZIP_sf"/>
</dbReference>
<dbReference type="InterPro" id="IPR005643">
    <property type="entry name" value="JNK"/>
</dbReference>
<dbReference type="InterPro" id="IPR002112">
    <property type="entry name" value="Leuzip_Jun"/>
</dbReference>
<dbReference type="InterPro" id="IPR008917">
    <property type="entry name" value="TF_DNA-bd_sf"/>
</dbReference>
<dbReference type="PANTHER" id="PTHR11462">
    <property type="entry name" value="JUN TRANSCRIPTION FACTOR-RELATED"/>
    <property type="match status" value="1"/>
</dbReference>
<dbReference type="PANTHER" id="PTHR11462:SF37">
    <property type="entry name" value="TRANSCRIPTION FACTOR JUNB"/>
    <property type="match status" value="1"/>
</dbReference>
<dbReference type="Pfam" id="PF00170">
    <property type="entry name" value="bZIP_1"/>
    <property type="match status" value="1"/>
</dbReference>
<dbReference type="Pfam" id="PF03957">
    <property type="entry name" value="Jun"/>
    <property type="match status" value="1"/>
</dbReference>
<dbReference type="PRINTS" id="PR00043">
    <property type="entry name" value="LEUZIPPRJUN"/>
</dbReference>
<dbReference type="SMART" id="SM00338">
    <property type="entry name" value="BRLZ"/>
    <property type="match status" value="1"/>
</dbReference>
<dbReference type="SUPFAM" id="SSF47454">
    <property type="entry name" value="A DNA-binding domain in eukaryotic transcription factors"/>
    <property type="match status" value="1"/>
</dbReference>
<dbReference type="SUPFAM" id="SSF57959">
    <property type="entry name" value="Leucine zipper domain"/>
    <property type="match status" value="1"/>
</dbReference>
<dbReference type="PROSITE" id="PS50217">
    <property type="entry name" value="BZIP"/>
    <property type="match status" value="1"/>
</dbReference>
<dbReference type="PROSITE" id="PS00036">
    <property type="entry name" value="BZIP_BASIC"/>
    <property type="match status" value="1"/>
</dbReference>